<protein>
    <recommendedName>
        <fullName evidence="2">tRNA (guanine-N(7)-)-methyltransferase</fullName>
        <ecNumber evidence="2">2.1.1.33</ecNumber>
    </recommendedName>
    <alternativeName>
        <fullName evidence="2">tRNA (guanine(46)-N(7))-methyltransferase</fullName>
    </alternativeName>
    <alternativeName>
        <fullName evidence="2">tRNA(m7G46)-methyltransferase</fullName>
    </alternativeName>
</protein>
<gene>
    <name evidence="2" type="primary">trmB</name>
    <name type="ordered locus">SPJ_0511</name>
</gene>
<sequence length="211" mass="24379">MRVRNRKGATELLEANPQYVVLNPLEAKAKWRDLFGNDNPIHVEVGSGKGAFVSGMAKQNPDINYIGIDIQKSVLSYALDKVLEVGVPNIKLLWVDGSDLTDYFEDGEIDRLYLNFSDPWPKKRHEKRRLTYKTFLDTFKRILPENGEIHFKTDNRGLFEYSLVSFSQYGMKLNGVWLDLHASDFEGNVMTEYEQKFSNKGQVIYRVEAEF</sequence>
<organism>
    <name type="scientific">Streptococcus pneumoniae (strain JJA)</name>
    <dbReference type="NCBI Taxonomy" id="488222"/>
    <lineage>
        <taxon>Bacteria</taxon>
        <taxon>Bacillati</taxon>
        <taxon>Bacillota</taxon>
        <taxon>Bacilli</taxon>
        <taxon>Lactobacillales</taxon>
        <taxon>Streptococcaceae</taxon>
        <taxon>Streptococcus</taxon>
    </lineage>
</organism>
<name>TRMB_STRZJ</name>
<comment type="function">
    <text evidence="2">Catalyzes the formation of N(7)-methylguanine at position 46 (m7G46) in tRNA.</text>
</comment>
<comment type="catalytic activity">
    <reaction evidence="2">
        <text>guanosine(46) in tRNA + S-adenosyl-L-methionine = N(7)-methylguanosine(46) in tRNA + S-adenosyl-L-homocysteine</text>
        <dbReference type="Rhea" id="RHEA:42708"/>
        <dbReference type="Rhea" id="RHEA-COMP:10188"/>
        <dbReference type="Rhea" id="RHEA-COMP:10189"/>
        <dbReference type="ChEBI" id="CHEBI:57856"/>
        <dbReference type="ChEBI" id="CHEBI:59789"/>
        <dbReference type="ChEBI" id="CHEBI:74269"/>
        <dbReference type="ChEBI" id="CHEBI:74480"/>
        <dbReference type="EC" id="2.1.1.33"/>
    </reaction>
</comment>
<comment type="pathway">
    <text evidence="2">tRNA modification; N(7)-methylguanine-tRNA biosynthesis.</text>
</comment>
<comment type="similarity">
    <text evidence="2">Belongs to the class I-like SAM-binding methyltransferase superfamily. TrmB family.</text>
</comment>
<feature type="chain" id="PRO_1000149668" description="tRNA (guanine-N(7)-)-methyltransferase">
    <location>
        <begin position="1"/>
        <end position="211"/>
    </location>
</feature>
<feature type="region of interest" description="Interaction with RNA" evidence="2">
    <location>
        <begin position="124"/>
        <end position="129"/>
    </location>
</feature>
<feature type="active site" evidence="1">
    <location>
        <position position="118"/>
    </location>
</feature>
<feature type="binding site" evidence="2">
    <location>
        <position position="44"/>
    </location>
    <ligand>
        <name>S-adenosyl-L-methionine</name>
        <dbReference type="ChEBI" id="CHEBI:59789"/>
    </ligand>
</feature>
<feature type="binding site" evidence="2">
    <location>
        <position position="69"/>
    </location>
    <ligand>
        <name>S-adenosyl-L-methionine</name>
        <dbReference type="ChEBI" id="CHEBI:59789"/>
    </ligand>
</feature>
<feature type="binding site" evidence="2">
    <location>
        <position position="96"/>
    </location>
    <ligand>
        <name>S-adenosyl-L-methionine</name>
        <dbReference type="ChEBI" id="CHEBI:59789"/>
    </ligand>
</feature>
<feature type="binding site" evidence="2">
    <location>
        <position position="118"/>
    </location>
    <ligand>
        <name>S-adenosyl-L-methionine</name>
        <dbReference type="ChEBI" id="CHEBI:59789"/>
    </ligand>
</feature>
<feature type="binding site" evidence="2">
    <location>
        <position position="122"/>
    </location>
    <ligand>
        <name>substrate</name>
    </ligand>
</feature>
<feature type="binding site" evidence="2">
    <location>
        <position position="154"/>
    </location>
    <ligand>
        <name>substrate</name>
    </ligand>
</feature>
<feature type="binding site" evidence="2">
    <location>
        <begin position="191"/>
        <end position="194"/>
    </location>
    <ligand>
        <name>substrate</name>
    </ligand>
</feature>
<dbReference type="EC" id="2.1.1.33" evidence="2"/>
<dbReference type="EMBL" id="CP000919">
    <property type="protein sequence ID" value="ACO19321.1"/>
    <property type="molecule type" value="Genomic_DNA"/>
</dbReference>
<dbReference type="RefSeq" id="WP_001266083.1">
    <property type="nucleotide sequence ID" value="NC_012466.1"/>
</dbReference>
<dbReference type="SMR" id="C1CCT3"/>
<dbReference type="GeneID" id="45654031"/>
<dbReference type="KEGG" id="sjj:SPJ_0511"/>
<dbReference type="HOGENOM" id="CLU_050910_2_1_9"/>
<dbReference type="UniPathway" id="UPA00989"/>
<dbReference type="Proteomes" id="UP000002206">
    <property type="component" value="Chromosome"/>
</dbReference>
<dbReference type="GO" id="GO:0043527">
    <property type="term" value="C:tRNA methyltransferase complex"/>
    <property type="evidence" value="ECO:0007669"/>
    <property type="project" value="TreeGrafter"/>
</dbReference>
<dbReference type="GO" id="GO:0008176">
    <property type="term" value="F:tRNA (guanine(46)-N7)-methyltransferase activity"/>
    <property type="evidence" value="ECO:0007669"/>
    <property type="project" value="UniProtKB-UniRule"/>
</dbReference>
<dbReference type="CDD" id="cd02440">
    <property type="entry name" value="AdoMet_MTases"/>
    <property type="match status" value="1"/>
</dbReference>
<dbReference type="FunFam" id="3.40.50.150:FF:000035">
    <property type="entry name" value="tRNA (guanine-N(7)-)-methyltransferase"/>
    <property type="match status" value="1"/>
</dbReference>
<dbReference type="Gene3D" id="3.40.50.150">
    <property type="entry name" value="Vaccinia Virus protein VP39"/>
    <property type="match status" value="1"/>
</dbReference>
<dbReference type="HAMAP" id="MF_01057">
    <property type="entry name" value="tRNA_methyltr_TrmB"/>
    <property type="match status" value="1"/>
</dbReference>
<dbReference type="InterPro" id="IPR029063">
    <property type="entry name" value="SAM-dependent_MTases_sf"/>
</dbReference>
<dbReference type="InterPro" id="IPR003358">
    <property type="entry name" value="tRNA_(Gua-N-7)_MeTrfase_Trmb"/>
</dbReference>
<dbReference type="InterPro" id="IPR055361">
    <property type="entry name" value="tRNA_methyltr_TrmB_bact"/>
</dbReference>
<dbReference type="NCBIfam" id="NF001080">
    <property type="entry name" value="PRK00121.2-2"/>
    <property type="match status" value="1"/>
</dbReference>
<dbReference type="NCBIfam" id="TIGR00091">
    <property type="entry name" value="tRNA (guanosine(46)-N7)-methyltransferase TrmB"/>
    <property type="match status" value="1"/>
</dbReference>
<dbReference type="PANTHER" id="PTHR23417">
    <property type="entry name" value="3-DEOXY-D-MANNO-OCTULOSONIC-ACID TRANSFERASE/TRNA GUANINE-N 7 - -METHYLTRANSFERASE"/>
    <property type="match status" value="1"/>
</dbReference>
<dbReference type="PANTHER" id="PTHR23417:SF14">
    <property type="entry name" value="PENTACOTRIPEPTIDE-REPEAT REGION OF PRORP DOMAIN-CONTAINING PROTEIN"/>
    <property type="match status" value="1"/>
</dbReference>
<dbReference type="Pfam" id="PF02390">
    <property type="entry name" value="Methyltransf_4"/>
    <property type="match status" value="1"/>
</dbReference>
<dbReference type="SUPFAM" id="SSF53335">
    <property type="entry name" value="S-adenosyl-L-methionine-dependent methyltransferases"/>
    <property type="match status" value="1"/>
</dbReference>
<dbReference type="PROSITE" id="PS51625">
    <property type="entry name" value="SAM_MT_TRMB"/>
    <property type="match status" value="1"/>
</dbReference>
<accession>C1CCT3</accession>
<reference key="1">
    <citation type="journal article" date="2010" name="Genome Biol.">
        <title>Structure and dynamics of the pan-genome of Streptococcus pneumoniae and closely related species.</title>
        <authorList>
            <person name="Donati C."/>
            <person name="Hiller N.L."/>
            <person name="Tettelin H."/>
            <person name="Muzzi A."/>
            <person name="Croucher N.J."/>
            <person name="Angiuoli S.V."/>
            <person name="Oggioni M."/>
            <person name="Dunning Hotopp J.C."/>
            <person name="Hu F.Z."/>
            <person name="Riley D.R."/>
            <person name="Covacci A."/>
            <person name="Mitchell T.J."/>
            <person name="Bentley S.D."/>
            <person name="Kilian M."/>
            <person name="Ehrlich G.D."/>
            <person name="Rappuoli R."/>
            <person name="Moxon E.R."/>
            <person name="Masignani V."/>
        </authorList>
    </citation>
    <scope>NUCLEOTIDE SEQUENCE [LARGE SCALE GENOMIC DNA]</scope>
    <source>
        <strain>JJA</strain>
    </source>
</reference>
<keyword id="KW-0489">Methyltransferase</keyword>
<keyword id="KW-0949">S-adenosyl-L-methionine</keyword>
<keyword id="KW-0808">Transferase</keyword>
<keyword id="KW-0819">tRNA processing</keyword>
<proteinExistence type="inferred from homology"/>
<evidence type="ECO:0000250" key="1"/>
<evidence type="ECO:0000255" key="2">
    <source>
        <dbReference type="HAMAP-Rule" id="MF_01057"/>
    </source>
</evidence>